<reference key="1">
    <citation type="journal article" date="2005" name="Nature">
        <title>The map-based sequence of the rice genome.</title>
        <authorList>
            <consortium name="International rice genome sequencing project (IRGSP)"/>
        </authorList>
    </citation>
    <scope>NUCLEOTIDE SEQUENCE [LARGE SCALE GENOMIC DNA]</scope>
    <source>
        <strain>cv. Nipponbare</strain>
    </source>
</reference>
<reference key="2">
    <citation type="journal article" date="2008" name="Nucleic Acids Res.">
        <title>The rice annotation project database (RAP-DB): 2008 update.</title>
        <authorList>
            <consortium name="The rice annotation project (RAP)"/>
        </authorList>
    </citation>
    <scope>GENOME REANNOTATION</scope>
    <source>
        <strain>cv. Nipponbare</strain>
    </source>
</reference>
<reference key="3">
    <citation type="journal article" date="2013" name="Rice">
        <title>Improvement of the Oryza sativa Nipponbare reference genome using next generation sequence and optical map data.</title>
        <authorList>
            <person name="Kawahara Y."/>
            <person name="de la Bastide M."/>
            <person name="Hamilton J.P."/>
            <person name="Kanamori H."/>
            <person name="McCombie W.R."/>
            <person name="Ouyang S."/>
            <person name="Schwartz D.C."/>
            <person name="Tanaka T."/>
            <person name="Wu J."/>
            <person name="Zhou S."/>
            <person name="Childs K.L."/>
            <person name="Davidson R.M."/>
            <person name="Lin H."/>
            <person name="Quesada-Ocampo L."/>
            <person name="Vaillancourt B."/>
            <person name="Sakai H."/>
            <person name="Lee S.S."/>
            <person name="Kim J."/>
            <person name="Numa H."/>
            <person name="Itoh T."/>
            <person name="Buell C.R."/>
            <person name="Matsumoto T."/>
        </authorList>
    </citation>
    <scope>GENOME REANNOTATION</scope>
    <source>
        <strain>cv. Nipponbare</strain>
    </source>
</reference>
<reference key="4">
    <citation type="journal article" date="2003" name="Science">
        <title>Collection, mapping, and annotation of over 28,000 cDNA clones from japonica rice.</title>
        <authorList>
            <consortium name="The rice full-length cDNA consortium"/>
        </authorList>
    </citation>
    <scope>NUCLEOTIDE SEQUENCE [LARGE SCALE MRNA] (ISOFORMS 1 AND 2)</scope>
    <source>
        <strain>cv. Nipponbare</strain>
    </source>
</reference>
<reference key="5">
    <citation type="journal article" date="2005" name="Plant Physiol.">
        <title>Phylogenetic analyses identify 10 classes of the protein disulfide isomerase family in plants, including single-domain protein disulfide isomerase-related proteins.</title>
        <authorList>
            <person name="Houston N.L."/>
            <person name="Fan C."/>
            <person name="Xiang J.Q."/>
            <person name="Schulze J.M."/>
            <person name="Jung R."/>
            <person name="Boston R.S."/>
        </authorList>
    </citation>
    <scope>GENE FAMILY</scope>
    <scope>NOMENCLATURE</scope>
</reference>
<reference key="6">
    <citation type="journal article" date="2010" name="BMC Plant Biol.">
        <title>The protein disulfide isomerase gene family in bread wheat (T. aestivum L.).</title>
        <authorList>
            <person name="d'Aloisio E."/>
            <person name="Paolacci A.R."/>
            <person name="Dhanapal A.P."/>
            <person name="Tanzarella O.A."/>
            <person name="Porceddu E."/>
            <person name="Ciaffi M."/>
        </authorList>
    </citation>
    <scope>GENE FAMILY</scope>
    <scope>NOMENCLATURE</scope>
</reference>
<reference key="7">
    <citation type="journal article" date="2011" name="Plant Cell">
        <title>Distinct roles of protein disulfide isomerase and P5 sulfhydryl oxidoreductases in multiple pathways for oxidation of structurally diverse storage proteins in rice.</title>
        <authorList>
            <person name="Onda Y."/>
            <person name="Nagamine A."/>
            <person name="Sakurai M."/>
            <person name="Kumamaru T."/>
            <person name="Ogawa M."/>
            <person name="Kawagoe Y."/>
        </authorList>
    </citation>
    <scope>FUNCTION</scope>
    <scope>SUBCELLULAR LOCATION</scope>
</reference>
<comment type="function">
    <text evidence="5">Acts as a protein-folding catalyst that interacts with nascent polypeptides to catalyze the formation, isomerization, and reduction or oxidation of disulfide bonds. May play a role in storage protein biogenesis.</text>
</comment>
<comment type="catalytic activity">
    <reaction>
        <text>Catalyzes the rearrangement of -S-S- bonds in proteins.</text>
        <dbReference type="EC" id="5.3.4.1"/>
    </reaction>
</comment>
<comment type="subcellular location">
    <subcellularLocation>
        <location evidence="5">Endoplasmic reticulum lumen</location>
    </subcellularLocation>
    <text evidence="5">Localizes on the surface of ER-derived type-I protein bodies in the endosperm.</text>
</comment>
<comment type="alternative products">
    <event type="alternative splicing"/>
    <isoform>
        <id>Q67UF5-1</id>
        <name>1</name>
        <sequence type="displayed"/>
    </isoform>
    <isoform>
        <id>Q67UF5-2</id>
        <name>2</name>
        <sequence type="described" ref="VSP_039982 VSP_039983"/>
    </isoform>
</comment>
<comment type="similarity">
    <text evidence="7">Belongs to the protein disulfide isomerase family.</text>
</comment>
<evidence type="ECO:0000250" key="1"/>
<evidence type="ECO:0000255" key="2"/>
<evidence type="ECO:0000255" key="3">
    <source>
        <dbReference type="PROSITE-ProRule" id="PRU00691"/>
    </source>
</evidence>
<evidence type="ECO:0000256" key="4">
    <source>
        <dbReference type="SAM" id="MobiDB-lite"/>
    </source>
</evidence>
<evidence type="ECO:0000269" key="5">
    <source>
    </source>
</evidence>
<evidence type="ECO:0000303" key="6">
    <source>
    </source>
</evidence>
<evidence type="ECO:0000305" key="7"/>
<organism>
    <name type="scientific">Oryza sativa subsp. japonica</name>
    <name type="common">Rice</name>
    <dbReference type="NCBI Taxonomy" id="39947"/>
    <lineage>
        <taxon>Eukaryota</taxon>
        <taxon>Viridiplantae</taxon>
        <taxon>Streptophyta</taxon>
        <taxon>Embryophyta</taxon>
        <taxon>Tracheophyta</taxon>
        <taxon>Spermatophyta</taxon>
        <taxon>Magnoliopsida</taxon>
        <taxon>Liliopsida</taxon>
        <taxon>Poales</taxon>
        <taxon>Poaceae</taxon>
        <taxon>BOP clade</taxon>
        <taxon>Oryzoideae</taxon>
        <taxon>Oryzeae</taxon>
        <taxon>Oryzinae</taxon>
        <taxon>Oryza</taxon>
        <taxon>Oryza sativa</taxon>
    </lineage>
</organism>
<keyword id="KW-0025">Alternative splicing</keyword>
<keyword id="KW-1015">Disulfide bond</keyword>
<keyword id="KW-0256">Endoplasmic reticulum</keyword>
<keyword id="KW-0413">Isomerase</keyword>
<keyword id="KW-0676">Redox-active center</keyword>
<keyword id="KW-1185">Reference proteome</keyword>
<keyword id="KW-0677">Repeat</keyword>
<keyword id="KW-0732">Signal</keyword>
<feature type="signal peptide" evidence="2">
    <location>
        <begin position="1"/>
        <end position="18"/>
    </location>
</feature>
<feature type="chain" id="PRO_0000400035" description="Protein disulfide isomerase-like 2-3">
    <location>
        <begin position="19"/>
        <end position="441"/>
    </location>
</feature>
<feature type="domain" description="Thioredoxin 1" evidence="3">
    <location>
        <begin position="19"/>
        <end position="139"/>
    </location>
</feature>
<feature type="domain" description="Thioredoxin 2" evidence="3">
    <location>
        <begin position="159"/>
        <end position="276"/>
    </location>
</feature>
<feature type="region of interest" description="Disordered" evidence="4">
    <location>
        <begin position="143"/>
        <end position="166"/>
    </location>
</feature>
<feature type="active site" description="Nucleophile" evidence="1">
    <location>
        <position position="59"/>
    </location>
</feature>
<feature type="active site" description="Nucleophile" evidence="1">
    <location>
        <position position="62"/>
    </location>
</feature>
<feature type="active site" description="Nucleophile" evidence="1">
    <location>
        <position position="195"/>
    </location>
</feature>
<feature type="active site" description="Nucleophile" evidence="1">
    <location>
        <position position="198"/>
    </location>
</feature>
<feature type="site" description="Contributes to redox potential value" evidence="1">
    <location>
        <position position="60"/>
    </location>
</feature>
<feature type="site" description="Contributes to redox potential value" evidence="1">
    <location>
        <position position="61"/>
    </location>
</feature>
<feature type="site" description="Lowers pKa of C-terminal Cys of first active site" evidence="1">
    <location>
        <position position="121"/>
    </location>
</feature>
<feature type="site" description="Contributes to redox potential value" evidence="1">
    <location>
        <position position="196"/>
    </location>
</feature>
<feature type="site" description="Contributes to redox potential value" evidence="1">
    <location>
        <position position="197"/>
    </location>
</feature>
<feature type="site" description="Lowers pKa of C-terminal Cys of second active site" evidence="1">
    <location>
        <position position="258"/>
    </location>
</feature>
<feature type="disulfide bond" description="Redox-active" evidence="3">
    <location>
        <begin position="59"/>
        <end position="62"/>
    </location>
</feature>
<feature type="disulfide bond" description="Redox-active" evidence="3">
    <location>
        <begin position="195"/>
        <end position="198"/>
    </location>
</feature>
<feature type="splice variant" id="VSP_039982" description="In isoform 2." evidence="6">
    <original>DAMEEKCASAAICFVSFLPDILDSKAEGRNKYLELLLSVAEKFKKSPYSFVWTAAGKQADLEKQVGVGGYGYPAMVALNVKKGAYAPLRSAFQLDEITEFVKEAGRGGK</original>
    <variation>VSFRDINKVILLWRQWSGIDVLTRWFGFCRTPWKRNVLLLPFALYLSFQISWIQRPKEETSTLSCYYLLLRNLKRVHTVLSGQLLGSKLILRSKLELVVMAIQRWLLST</variation>
    <location>
        <begin position="287"/>
        <end position="395"/>
    </location>
</feature>
<feature type="splice variant" id="VSP_039983" description="In isoform 2." evidence="6">
    <location>
        <begin position="396"/>
        <end position="441"/>
    </location>
</feature>
<feature type="sequence conflict" description="In Ref. 4; AK062254." evidence="7" ref="4">
    <original>K</original>
    <variation>R</variation>
    <location>
        <position position="388"/>
    </location>
</feature>
<name>PDI23_ORYSJ</name>
<protein>
    <recommendedName>
        <fullName>Protein disulfide isomerase-like 2-3</fullName>
        <shortName>OsPDIL2-3</shortName>
        <ecNumber>5.3.4.1</ecNumber>
    </recommendedName>
    <alternativeName>
        <fullName>Protein disulfide isomerase-like 5-1</fullName>
        <shortName>OsPDIL5-1</shortName>
    </alternativeName>
</protein>
<sequence>MRPAVAAALLLVAAAVAASPVSALYSAGSPVLQFNPNNFKSKVLNSNGVVLVEFFAPWCGHCQQLTPIWEKAAGVLKGVATVAALDADAHKELAQEYGIRGFPTIKVFVPGKPPVDYQGARDVKPIVEFALSQVKALLRDRLNGKTSAGSGGKKSGGSSEKTEPSASIELNSQNFDKLVTKSKDLWIVEFFAPWCGHCKKLAPEWKKAAKNLKGQVKLGHVDCDAEKSLMSKYKVEGFPTILVFGADKESPFPYQGARVASAIESFALEQLEANAAPPEVSELTGPDAMEEKCASAAICFVSFLPDILDSKAEGRNKYLELLLSVAEKFKKSPYSFVWTAAGKQADLEKQVGVGGYGYPAMVALNVKKGAYAPLRSAFQLDEITEFVKEAGRGGKGNLPLDGTPTIVQSEPWDGKDGEVIEEDEFSLEELMADNSPVNDEL</sequence>
<dbReference type="EC" id="5.3.4.1"/>
<dbReference type="EMBL" id="AP005393">
    <property type="protein sequence ID" value="BAD38008.1"/>
    <property type="molecule type" value="Genomic_DNA"/>
</dbReference>
<dbReference type="EMBL" id="AP005393">
    <property type="protein sequence ID" value="BAD38009.1"/>
    <property type="molecule type" value="Genomic_DNA"/>
</dbReference>
<dbReference type="EMBL" id="AP005559">
    <property type="protein sequence ID" value="BAD38214.1"/>
    <property type="molecule type" value="Genomic_DNA"/>
</dbReference>
<dbReference type="EMBL" id="AP005559">
    <property type="protein sequence ID" value="BAD38215.1"/>
    <property type="molecule type" value="Genomic_DNA"/>
</dbReference>
<dbReference type="EMBL" id="AP008215">
    <property type="protein sequence ID" value="BAF25245.1"/>
    <property type="molecule type" value="Genomic_DNA"/>
</dbReference>
<dbReference type="EMBL" id="AP014965">
    <property type="protein sequence ID" value="BAT08387.1"/>
    <property type="molecule type" value="Genomic_DNA"/>
</dbReference>
<dbReference type="EMBL" id="AP014965">
    <property type="protein sequence ID" value="BAT08388.1"/>
    <property type="molecule type" value="Genomic_DNA"/>
</dbReference>
<dbReference type="EMBL" id="AK062254">
    <property type="status" value="NOT_ANNOTATED_CDS"/>
    <property type="molecule type" value="mRNA"/>
</dbReference>
<dbReference type="EMBL" id="AK072941">
    <property type="status" value="NOT_ANNOTATED_CDS"/>
    <property type="molecule type" value="mRNA"/>
</dbReference>
<dbReference type="RefSeq" id="XP_015611801.1">
    <property type="nucleotide sequence ID" value="XM_015756315.1"/>
</dbReference>
<dbReference type="SMR" id="Q67UF5"/>
<dbReference type="FunCoup" id="Q67UF5">
    <property type="interactions" value="1933"/>
</dbReference>
<dbReference type="STRING" id="39947.Q67UF5"/>
<dbReference type="PaxDb" id="39947-Q67UF5"/>
<dbReference type="EnsemblPlants" id="Os09t0451500-02">
    <molecule id="Q67UF5-1"/>
    <property type="protein sequence ID" value="Os09t0451500-02"/>
    <property type="gene ID" value="Os09g0451500"/>
</dbReference>
<dbReference type="Gramene" id="Os09t0451500-02">
    <molecule id="Q67UF5-1"/>
    <property type="protein sequence ID" value="Os09t0451500-02"/>
    <property type="gene ID" value="Os09g0451500"/>
</dbReference>
<dbReference type="KEGG" id="dosa:Os09g0451500"/>
<dbReference type="eggNOG" id="KOG0191">
    <property type="taxonomic scope" value="Eukaryota"/>
</dbReference>
<dbReference type="HOGENOM" id="CLU_030311_1_0_1"/>
<dbReference type="InParanoid" id="Q67UF5"/>
<dbReference type="OMA" id="KQKLWGW"/>
<dbReference type="OrthoDB" id="10264505at2759"/>
<dbReference type="BRENDA" id="5.3.4.1">
    <property type="organism ID" value="4460"/>
</dbReference>
<dbReference type="Proteomes" id="UP000000763">
    <property type="component" value="Chromosome 9"/>
</dbReference>
<dbReference type="Proteomes" id="UP000059680">
    <property type="component" value="Chromosome 9"/>
</dbReference>
<dbReference type="GO" id="GO:0005783">
    <property type="term" value="C:endoplasmic reticulum"/>
    <property type="evidence" value="ECO:0000318"/>
    <property type="project" value="GO_Central"/>
</dbReference>
<dbReference type="GO" id="GO:0005788">
    <property type="term" value="C:endoplasmic reticulum lumen"/>
    <property type="evidence" value="ECO:0000314"/>
    <property type="project" value="UniProtKB"/>
</dbReference>
<dbReference type="GO" id="GO:0003756">
    <property type="term" value="F:protein disulfide isomerase activity"/>
    <property type="evidence" value="ECO:0007669"/>
    <property type="project" value="UniProtKB-EC"/>
</dbReference>
<dbReference type="GO" id="GO:0015035">
    <property type="term" value="F:protein-disulfide reductase activity"/>
    <property type="evidence" value="ECO:0000318"/>
    <property type="project" value="GO_Central"/>
</dbReference>
<dbReference type="GO" id="GO:0034976">
    <property type="term" value="P:response to endoplasmic reticulum stress"/>
    <property type="evidence" value="ECO:0000318"/>
    <property type="project" value="GO_Central"/>
</dbReference>
<dbReference type="CDD" id="cd02983">
    <property type="entry name" value="P5_C"/>
    <property type="match status" value="1"/>
</dbReference>
<dbReference type="CDD" id="cd03001">
    <property type="entry name" value="PDI_a_P5"/>
    <property type="match status" value="2"/>
</dbReference>
<dbReference type="FunFam" id="3.40.30.10:FF:000050">
    <property type="entry name" value="protein disulfide-isomerase A6 isoform X1"/>
    <property type="match status" value="2"/>
</dbReference>
<dbReference type="FunFam" id="3.40.30.10:FF:000228">
    <property type="entry name" value="Protein disulfide-isomerase like 2-2"/>
    <property type="match status" value="1"/>
</dbReference>
<dbReference type="Gene3D" id="3.40.30.10">
    <property type="entry name" value="Glutaredoxin"/>
    <property type="match status" value="3"/>
</dbReference>
<dbReference type="InterPro" id="IPR005788">
    <property type="entry name" value="PDI_thioredoxin-like_dom"/>
</dbReference>
<dbReference type="InterPro" id="IPR036249">
    <property type="entry name" value="Thioredoxin-like_sf"/>
</dbReference>
<dbReference type="InterPro" id="IPR017937">
    <property type="entry name" value="Thioredoxin_CS"/>
</dbReference>
<dbReference type="InterPro" id="IPR013766">
    <property type="entry name" value="Thioredoxin_domain"/>
</dbReference>
<dbReference type="NCBIfam" id="TIGR01126">
    <property type="entry name" value="pdi_dom"/>
    <property type="match status" value="2"/>
</dbReference>
<dbReference type="PANTHER" id="PTHR45815">
    <property type="entry name" value="PROTEIN DISULFIDE-ISOMERASE A6"/>
    <property type="match status" value="1"/>
</dbReference>
<dbReference type="PANTHER" id="PTHR45815:SF3">
    <property type="entry name" value="PROTEIN DISULFIDE-ISOMERASE A6"/>
    <property type="match status" value="1"/>
</dbReference>
<dbReference type="Pfam" id="PF24541">
    <property type="entry name" value="Thioredox_PDIA6_C"/>
    <property type="match status" value="1"/>
</dbReference>
<dbReference type="Pfam" id="PF00085">
    <property type="entry name" value="Thioredoxin"/>
    <property type="match status" value="2"/>
</dbReference>
<dbReference type="PRINTS" id="PR00421">
    <property type="entry name" value="THIOREDOXIN"/>
</dbReference>
<dbReference type="SUPFAM" id="SSF52833">
    <property type="entry name" value="Thioredoxin-like"/>
    <property type="match status" value="3"/>
</dbReference>
<dbReference type="PROSITE" id="PS00194">
    <property type="entry name" value="THIOREDOXIN_1"/>
    <property type="match status" value="2"/>
</dbReference>
<dbReference type="PROSITE" id="PS51352">
    <property type="entry name" value="THIOREDOXIN_2"/>
    <property type="match status" value="2"/>
</dbReference>
<proteinExistence type="evidence at transcript level"/>
<gene>
    <name type="primary">PDIL2-3</name>
    <name type="synonym">PDIL5-1</name>
    <name type="ordered locus">Os09g0451500</name>
    <name type="ordered locus">LOC_Os09g27830</name>
    <name type="ORF">OJ1163_C07.26</name>
    <name type="ORF">P0488D02.3</name>
</gene>
<accession>Q67UF5</accession>
<accession>A0A0P0XND7</accession>
<accession>Q67UF4</accession>